<sequence length="250" mass="26919">MKICLIDETGAGDGALSVLAARWGLEHDEDNLMALVLTPEHLELRKRDEPKLGGIFVDFVGGAMAHRRKFGGGRGEAVAKAVGIKGDYLPDVVDATAGLGRDAFVLASVGCRVRMLERNPVVAALLDDGLARGYADAEIGGWLQERLQLIHASSLTALTDITPRPQVVYLDPMFPHKQKSALVKKEMRVFQSLVGPDLDADGLLEPARLLATKRVVVKRPDYAPPLANVATPNAVVTKGHRFDIYAGTPV</sequence>
<organism>
    <name type="scientific">Escherichia coli (strain 55989 / EAEC)</name>
    <dbReference type="NCBI Taxonomy" id="585055"/>
    <lineage>
        <taxon>Bacteria</taxon>
        <taxon>Pseudomonadati</taxon>
        <taxon>Pseudomonadota</taxon>
        <taxon>Gammaproteobacteria</taxon>
        <taxon>Enterobacterales</taxon>
        <taxon>Enterobacteriaceae</taxon>
        <taxon>Escherichia</taxon>
    </lineage>
</organism>
<keyword id="KW-0963">Cytoplasm</keyword>
<keyword id="KW-0489">Methyltransferase</keyword>
<keyword id="KW-1185">Reference proteome</keyword>
<keyword id="KW-0698">rRNA processing</keyword>
<keyword id="KW-0949">S-adenosyl-L-methionine</keyword>
<keyword id="KW-0808">Transferase</keyword>
<accession>B7L5X8</accession>
<gene>
    <name evidence="1" type="primary">rsmJ</name>
    <name type="synonym">yhiQ</name>
    <name type="ordered locus">EC55989_3935</name>
</gene>
<proteinExistence type="inferred from homology"/>
<evidence type="ECO:0000255" key="1">
    <source>
        <dbReference type="HAMAP-Rule" id="MF_01523"/>
    </source>
</evidence>
<dbReference type="EC" id="2.1.1.242" evidence="1"/>
<dbReference type="EMBL" id="CU928145">
    <property type="protein sequence ID" value="CAV00376.1"/>
    <property type="molecule type" value="Genomic_DNA"/>
</dbReference>
<dbReference type="RefSeq" id="WP_000686608.1">
    <property type="nucleotide sequence ID" value="NC_011748.1"/>
</dbReference>
<dbReference type="SMR" id="B7L5X8"/>
<dbReference type="GeneID" id="93778496"/>
<dbReference type="KEGG" id="eck:EC55989_3935"/>
<dbReference type="HOGENOM" id="CLU_076324_0_0_6"/>
<dbReference type="Proteomes" id="UP000000746">
    <property type="component" value="Chromosome"/>
</dbReference>
<dbReference type="GO" id="GO:0005737">
    <property type="term" value="C:cytoplasm"/>
    <property type="evidence" value="ECO:0007669"/>
    <property type="project" value="UniProtKB-SubCell"/>
</dbReference>
<dbReference type="GO" id="GO:0008990">
    <property type="term" value="F:rRNA (guanine-N2-)-methyltransferase activity"/>
    <property type="evidence" value="ECO:0007669"/>
    <property type="project" value="UniProtKB-UniRule"/>
</dbReference>
<dbReference type="CDD" id="cd02440">
    <property type="entry name" value="AdoMet_MTases"/>
    <property type="match status" value="1"/>
</dbReference>
<dbReference type="FunFam" id="3.40.1630.10:FF:000001">
    <property type="entry name" value="Ribosomal RNA small subunit methyltransferase J"/>
    <property type="match status" value="1"/>
</dbReference>
<dbReference type="FunFam" id="3.40.50.150:FF:000072">
    <property type="entry name" value="Ribosomal RNA small subunit methyltransferase J"/>
    <property type="match status" value="1"/>
</dbReference>
<dbReference type="Gene3D" id="3.40.50.150">
    <property type="entry name" value="Vaccinia Virus protein VP39"/>
    <property type="match status" value="1"/>
</dbReference>
<dbReference type="Gene3D" id="3.40.1630.10">
    <property type="entry name" value="YhiQ-like domain"/>
    <property type="match status" value="1"/>
</dbReference>
<dbReference type="HAMAP" id="MF_01523">
    <property type="entry name" value="16SrRNA_methyltr_J"/>
    <property type="match status" value="1"/>
</dbReference>
<dbReference type="InterPro" id="IPR007536">
    <property type="entry name" value="16SrRNA_methylTrfase_J"/>
</dbReference>
<dbReference type="InterPro" id="IPR029063">
    <property type="entry name" value="SAM-dependent_MTases_sf"/>
</dbReference>
<dbReference type="NCBIfam" id="NF008012">
    <property type="entry name" value="PRK10742.1"/>
    <property type="match status" value="1"/>
</dbReference>
<dbReference type="PANTHER" id="PTHR36112">
    <property type="entry name" value="RIBOSOMAL RNA SMALL SUBUNIT METHYLTRANSFERASE J"/>
    <property type="match status" value="1"/>
</dbReference>
<dbReference type="PANTHER" id="PTHR36112:SF1">
    <property type="entry name" value="RIBOSOMAL RNA SMALL SUBUNIT METHYLTRANSFERASE J"/>
    <property type="match status" value="1"/>
</dbReference>
<dbReference type="Pfam" id="PF04445">
    <property type="entry name" value="SAM_MT"/>
    <property type="match status" value="1"/>
</dbReference>
<dbReference type="SUPFAM" id="SSF53335">
    <property type="entry name" value="S-adenosyl-L-methionine-dependent methyltransferases"/>
    <property type="match status" value="1"/>
</dbReference>
<reference key="1">
    <citation type="journal article" date="2009" name="PLoS Genet.">
        <title>Organised genome dynamics in the Escherichia coli species results in highly diverse adaptive paths.</title>
        <authorList>
            <person name="Touchon M."/>
            <person name="Hoede C."/>
            <person name="Tenaillon O."/>
            <person name="Barbe V."/>
            <person name="Baeriswyl S."/>
            <person name="Bidet P."/>
            <person name="Bingen E."/>
            <person name="Bonacorsi S."/>
            <person name="Bouchier C."/>
            <person name="Bouvet O."/>
            <person name="Calteau A."/>
            <person name="Chiapello H."/>
            <person name="Clermont O."/>
            <person name="Cruveiller S."/>
            <person name="Danchin A."/>
            <person name="Diard M."/>
            <person name="Dossat C."/>
            <person name="Karoui M.E."/>
            <person name="Frapy E."/>
            <person name="Garry L."/>
            <person name="Ghigo J.M."/>
            <person name="Gilles A.M."/>
            <person name="Johnson J."/>
            <person name="Le Bouguenec C."/>
            <person name="Lescat M."/>
            <person name="Mangenot S."/>
            <person name="Martinez-Jehanne V."/>
            <person name="Matic I."/>
            <person name="Nassif X."/>
            <person name="Oztas S."/>
            <person name="Petit M.A."/>
            <person name="Pichon C."/>
            <person name="Rouy Z."/>
            <person name="Ruf C.S."/>
            <person name="Schneider D."/>
            <person name="Tourret J."/>
            <person name="Vacherie B."/>
            <person name="Vallenet D."/>
            <person name="Medigue C."/>
            <person name="Rocha E.P.C."/>
            <person name="Denamur E."/>
        </authorList>
    </citation>
    <scope>NUCLEOTIDE SEQUENCE [LARGE SCALE GENOMIC DNA]</scope>
    <source>
        <strain>55989 / EAEC</strain>
    </source>
</reference>
<feature type="chain" id="PRO_1000185123" description="Ribosomal RNA small subunit methyltransferase J">
    <location>
        <begin position="1"/>
        <end position="250"/>
    </location>
</feature>
<feature type="binding site" evidence="1">
    <location>
        <begin position="101"/>
        <end position="102"/>
    </location>
    <ligand>
        <name>S-adenosyl-L-methionine</name>
        <dbReference type="ChEBI" id="CHEBI:59789"/>
    </ligand>
</feature>
<feature type="binding site" evidence="1">
    <location>
        <begin position="117"/>
        <end position="118"/>
    </location>
    <ligand>
        <name>S-adenosyl-L-methionine</name>
        <dbReference type="ChEBI" id="CHEBI:59789"/>
    </ligand>
</feature>
<feature type="binding site" evidence="1">
    <location>
        <begin position="153"/>
        <end position="154"/>
    </location>
    <ligand>
        <name>S-adenosyl-L-methionine</name>
        <dbReference type="ChEBI" id="CHEBI:59789"/>
    </ligand>
</feature>
<feature type="binding site" evidence="1">
    <location>
        <position position="171"/>
    </location>
    <ligand>
        <name>S-adenosyl-L-methionine</name>
        <dbReference type="ChEBI" id="CHEBI:59789"/>
    </ligand>
</feature>
<comment type="function">
    <text evidence="1">Specifically methylates the guanosine in position 1516 of 16S rRNA.</text>
</comment>
<comment type="catalytic activity">
    <reaction evidence="1">
        <text>guanosine(1516) in 16S rRNA + S-adenosyl-L-methionine = N(2)-methylguanosine(1516) in 16S rRNA + S-adenosyl-L-homocysteine + H(+)</text>
        <dbReference type="Rhea" id="RHEA:43220"/>
        <dbReference type="Rhea" id="RHEA-COMP:10412"/>
        <dbReference type="Rhea" id="RHEA-COMP:10413"/>
        <dbReference type="ChEBI" id="CHEBI:15378"/>
        <dbReference type="ChEBI" id="CHEBI:57856"/>
        <dbReference type="ChEBI" id="CHEBI:59789"/>
        <dbReference type="ChEBI" id="CHEBI:74269"/>
        <dbReference type="ChEBI" id="CHEBI:74481"/>
        <dbReference type="EC" id="2.1.1.242"/>
    </reaction>
</comment>
<comment type="subcellular location">
    <subcellularLocation>
        <location evidence="1">Cytoplasm</location>
    </subcellularLocation>
</comment>
<comment type="similarity">
    <text evidence="1">Belongs to the methyltransferase superfamily. RsmJ family.</text>
</comment>
<protein>
    <recommendedName>
        <fullName evidence="1">Ribosomal RNA small subunit methyltransferase J</fullName>
        <ecNumber evidence="1">2.1.1.242</ecNumber>
    </recommendedName>
    <alternativeName>
        <fullName evidence="1">16S rRNA m2G1516 methyltransferase</fullName>
    </alternativeName>
    <alternativeName>
        <fullName evidence="1">rRNA (guanine-N(2)-)-methyltransferase</fullName>
    </alternativeName>
</protein>
<name>RSMJ_ECO55</name>